<comment type="catalytic activity">
    <reaction evidence="2">
        <text>5-phospho-beta-D-ribosylamine + glycine + ATP = N(1)-(5-phospho-beta-D-ribosyl)glycinamide + ADP + phosphate + H(+)</text>
        <dbReference type="Rhea" id="RHEA:17453"/>
        <dbReference type="ChEBI" id="CHEBI:15378"/>
        <dbReference type="ChEBI" id="CHEBI:30616"/>
        <dbReference type="ChEBI" id="CHEBI:43474"/>
        <dbReference type="ChEBI" id="CHEBI:57305"/>
        <dbReference type="ChEBI" id="CHEBI:58681"/>
        <dbReference type="ChEBI" id="CHEBI:143788"/>
        <dbReference type="ChEBI" id="CHEBI:456216"/>
        <dbReference type="EC" id="6.3.4.13"/>
    </reaction>
</comment>
<comment type="cofactor">
    <cofactor evidence="1">
        <name>Mg(2+)</name>
        <dbReference type="ChEBI" id="CHEBI:18420"/>
    </cofactor>
    <cofactor evidence="1">
        <name>Mn(2+)</name>
        <dbReference type="ChEBI" id="CHEBI:29035"/>
    </cofactor>
    <text evidence="1">Binds 2 magnesium or manganese ions per subunit.</text>
</comment>
<comment type="pathway">
    <text evidence="2">Purine metabolism; IMP biosynthesis via de novo pathway; N(1)-(5-phospho-D-ribosyl)glycinamide from 5-phospho-alpha-D-ribose 1-diphosphate: step 2/2.</text>
</comment>
<comment type="similarity">
    <text evidence="2">Belongs to the GARS family.</text>
</comment>
<keyword id="KW-0067">ATP-binding</keyword>
<keyword id="KW-0436">Ligase</keyword>
<keyword id="KW-0460">Magnesium</keyword>
<keyword id="KW-0464">Manganese</keyword>
<keyword id="KW-0479">Metal-binding</keyword>
<keyword id="KW-0547">Nucleotide-binding</keyword>
<keyword id="KW-0658">Purine biosynthesis</keyword>
<keyword id="KW-1185">Reference proteome</keyword>
<organism>
    <name type="scientific">Methanocorpusculum labreanum (strain ATCC 43576 / DSM 4855 / Z)</name>
    <dbReference type="NCBI Taxonomy" id="410358"/>
    <lineage>
        <taxon>Archaea</taxon>
        <taxon>Methanobacteriati</taxon>
        <taxon>Methanobacteriota</taxon>
        <taxon>Stenosarchaea group</taxon>
        <taxon>Methanomicrobia</taxon>
        <taxon>Methanomicrobiales</taxon>
        <taxon>Methanocorpusculaceae</taxon>
        <taxon>Methanocorpusculum</taxon>
    </lineage>
</organism>
<protein>
    <recommendedName>
        <fullName evidence="2">Phosphoribosylamine--glycine ligase</fullName>
        <ecNumber evidence="2">6.3.4.13</ecNumber>
    </recommendedName>
    <alternativeName>
        <fullName evidence="2">GARS</fullName>
    </alternativeName>
    <alternativeName>
        <fullName evidence="2">Glycinamide ribonucleotide synthetase</fullName>
    </alternativeName>
    <alternativeName>
        <fullName evidence="2">Phosphoribosylglycinamide synthetase</fullName>
    </alternativeName>
</protein>
<proteinExistence type="inferred from homology"/>
<accession>A2SQ86</accession>
<sequence>MKILVAGGGGREHAICLALTKNANVELYSVMGKKNPGIAKIARESFIHAETDVPAVLAFAKEHNIQYAVVGPEAPLEAGLVDALTKAGIGCVGPVKAAARIETDKGFCRGLMNKYGIDGCPAYKLCNTPKEAAEFIREYPGDLAVKPTGLTGGKGVKVMGEQVDREGAVEYAMTLKDQVIILEERLLGEEFTLMAFVDGKHLVPMPLVQDHKRAFEGDVGPNTGGMGSYSLENHKFPFVTEDDYAKAISIMQATIDALAQEGSPYKGILYGQFMNTKTGPKVIEFNARFGDPEAMNVLSILTSDFLTIAEHIINGTLSANDVSFEEKATVCKYIVPMDYPDKPHAGDVITVGPAENTILYYANIALENGVLMTLTSRTMAYVGIGASLAEAEKYAEAACRNVSGNVRYRSDIGTEALFAKRIAHMKELRS</sequence>
<reference key="1">
    <citation type="journal article" date="2009" name="Stand. Genomic Sci.">
        <title>Complete genome sequence of Methanocorpusculum labreanum type strain Z.</title>
        <authorList>
            <person name="Anderson I.J."/>
            <person name="Sieprawska-Lupa M."/>
            <person name="Goltsman E."/>
            <person name="Lapidus A."/>
            <person name="Copeland A."/>
            <person name="Glavina Del Rio T."/>
            <person name="Tice H."/>
            <person name="Dalin E."/>
            <person name="Barry K."/>
            <person name="Pitluck S."/>
            <person name="Hauser L."/>
            <person name="Land M."/>
            <person name="Lucas S."/>
            <person name="Richardson P."/>
            <person name="Whitman W.B."/>
            <person name="Kyrpides N.C."/>
        </authorList>
    </citation>
    <scope>NUCLEOTIDE SEQUENCE [LARGE SCALE GENOMIC DNA]</scope>
    <source>
        <strain>ATCC 43576 / DSM 4855 / Z</strain>
    </source>
</reference>
<gene>
    <name evidence="2" type="primary">purD</name>
    <name type="ordered locus">Mlab_0316</name>
</gene>
<dbReference type="EC" id="6.3.4.13" evidence="2"/>
<dbReference type="EMBL" id="CP000559">
    <property type="protein sequence ID" value="ABN06492.1"/>
    <property type="molecule type" value="Genomic_DNA"/>
</dbReference>
<dbReference type="RefSeq" id="WP_011832693.1">
    <property type="nucleotide sequence ID" value="NC_008942.1"/>
</dbReference>
<dbReference type="SMR" id="A2SQ86"/>
<dbReference type="STRING" id="410358.Mlab_0316"/>
<dbReference type="GeneID" id="4795228"/>
<dbReference type="KEGG" id="mla:Mlab_0316"/>
<dbReference type="eggNOG" id="arCOG04415">
    <property type="taxonomic scope" value="Archaea"/>
</dbReference>
<dbReference type="HOGENOM" id="CLU_027420_3_0_2"/>
<dbReference type="OrthoDB" id="146558at2157"/>
<dbReference type="UniPathway" id="UPA00074">
    <property type="reaction ID" value="UER00125"/>
</dbReference>
<dbReference type="Proteomes" id="UP000000365">
    <property type="component" value="Chromosome"/>
</dbReference>
<dbReference type="GO" id="GO:0005524">
    <property type="term" value="F:ATP binding"/>
    <property type="evidence" value="ECO:0007669"/>
    <property type="project" value="UniProtKB-KW"/>
</dbReference>
<dbReference type="GO" id="GO:0046872">
    <property type="term" value="F:metal ion binding"/>
    <property type="evidence" value="ECO:0007669"/>
    <property type="project" value="UniProtKB-KW"/>
</dbReference>
<dbReference type="GO" id="GO:0004637">
    <property type="term" value="F:phosphoribosylamine-glycine ligase activity"/>
    <property type="evidence" value="ECO:0007669"/>
    <property type="project" value="UniProtKB-UniRule"/>
</dbReference>
<dbReference type="GO" id="GO:0006189">
    <property type="term" value="P:'de novo' IMP biosynthetic process"/>
    <property type="evidence" value="ECO:0007669"/>
    <property type="project" value="UniProtKB-UniRule"/>
</dbReference>
<dbReference type="GO" id="GO:0009113">
    <property type="term" value="P:purine nucleobase biosynthetic process"/>
    <property type="evidence" value="ECO:0007669"/>
    <property type="project" value="InterPro"/>
</dbReference>
<dbReference type="Gene3D" id="3.40.50.20">
    <property type="match status" value="1"/>
</dbReference>
<dbReference type="Gene3D" id="3.30.1490.20">
    <property type="entry name" value="ATP-grasp fold, A domain"/>
    <property type="match status" value="1"/>
</dbReference>
<dbReference type="Gene3D" id="3.30.470.20">
    <property type="entry name" value="ATP-grasp fold, B domain"/>
    <property type="match status" value="1"/>
</dbReference>
<dbReference type="Gene3D" id="3.90.600.10">
    <property type="entry name" value="Phosphoribosylglycinamide synthetase, C-terminal domain"/>
    <property type="match status" value="1"/>
</dbReference>
<dbReference type="HAMAP" id="MF_00138">
    <property type="entry name" value="GARS"/>
    <property type="match status" value="1"/>
</dbReference>
<dbReference type="InterPro" id="IPR011761">
    <property type="entry name" value="ATP-grasp"/>
</dbReference>
<dbReference type="InterPro" id="IPR013815">
    <property type="entry name" value="ATP_grasp_subdomain_1"/>
</dbReference>
<dbReference type="InterPro" id="IPR016185">
    <property type="entry name" value="PreATP-grasp_dom_sf"/>
</dbReference>
<dbReference type="InterPro" id="IPR020561">
    <property type="entry name" value="PRibGlycinamid_synth_ATP-grasp"/>
</dbReference>
<dbReference type="InterPro" id="IPR000115">
    <property type="entry name" value="PRibGlycinamide_synth"/>
</dbReference>
<dbReference type="InterPro" id="IPR020560">
    <property type="entry name" value="PRibGlycinamide_synth_C-dom"/>
</dbReference>
<dbReference type="InterPro" id="IPR037123">
    <property type="entry name" value="PRibGlycinamide_synth_C_sf"/>
</dbReference>
<dbReference type="InterPro" id="IPR020559">
    <property type="entry name" value="PRibGlycinamide_synth_CS"/>
</dbReference>
<dbReference type="InterPro" id="IPR020562">
    <property type="entry name" value="PRibGlycinamide_synth_N"/>
</dbReference>
<dbReference type="InterPro" id="IPR011054">
    <property type="entry name" value="Rudment_hybrid_motif"/>
</dbReference>
<dbReference type="NCBIfam" id="TIGR00877">
    <property type="entry name" value="purD"/>
    <property type="match status" value="1"/>
</dbReference>
<dbReference type="PANTHER" id="PTHR43472">
    <property type="entry name" value="PHOSPHORIBOSYLAMINE--GLYCINE LIGASE"/>
    <property type="match status" value="1"/>
</dbReference>
<dbReference type="PANTHER" id="PTHR43472:SF1">
    <property type="entry name" value="PHOSPHORIBOSYLAMINE--GLYCINE LIGASE, CHLOROPLASTIC"/>
    <property type="match status" value="1"/>
</dbReference>
<dbReference type="Pfam" id="PF01071">
    <property type="entry name" value="GARS_A"/>
    <property type="match status" value="1"/>
</dbReference>
<dbReference type="Pfam" id="PF02843">
    <property type="entry name" value="GARS_C"/>
    <property type="match status" value="1"/>
</dbReference>
<dbReference type="Pfam" id="PF02844">
    <property type="entry name" value="GARS_N"/>
    <property type="match status" value="1"/>
</dbReference>
<dbReference type="SMART" id="SM01209">
    <property type="entry name" value="GARS_A"/>
    <property type="match status" value="1"/>
</dbReference>
<dbReference type="SMART" id="SM01210">
    <property type="entry name" value="GARS_C"/>
    <property type="match status" value="1"/>
</dbReference>
<dbReference type="SUPFAM" id="SSF56059">
    <property type="entry name" value="Glutathione synthetase ATP-binding domain-like"/>
    <property type="match status" value="1"/>
</dbReference>
<dbReference type="SUPFAM" id="SSF52440">
    <property type="entry name" value="PreATP-grasp domain"/>
    <property type="match status" value="1"/>
</dbReference>
<dbReference type="SUPFAM" id="SSF51246">
    <property type="entry name" value="Rudiment single hybrid motif"/>
    <property type="match status" value="1"/>
</dbReference>
<dbReference type="PROSITE" id="PS50975">
    <property type="entry name" value="ATP_GRASP"/>
    <property type="match status" value="1"/>
</dbReference>
<dbReference type="PROSITE" id="PS00184">
    <property type="entry name" value="GARS"/>
    <property type="match status" value="1"/>
</dbReference>
<feature type="chain" id="PRO_1000018823" description="Phosphoribosylamine--glycine ligase">
    <location>
        <begin position="1"/>
        <end position="430"/>
    </location>
</feature>
<feature type="domain" description="ATP-grasp" evidence="2">
    <location>
        <begin position="109"/>
        <end position="314"/>
    </location>
</feature>
<feature type="binding site" evidence="2">
    <location>
        <begin position="136"/>
        <end position="192"/>
    </location>
    <ligand>
        <name>ATP</name>
        <dbReference type="ChEBI" id="CHEBI:30616"/>
    </ligand>
</feature>
<feature type="binding site" evidence="2">
    <location>
        <position position="272"/>
    </location>
    <ligand>
        <name>Mg(2+)</name>
        <dbReference type="ChEBI" id="CHEBI:18420"/>
        <label>1</label>
    </ligand>
</feature>
<feature type="binding site" evidence="2">
    <location>
        <position position="272"/>
    </location>
    <ligand>
        <name>Mn(2+)</name>
        <dbReference type="ChEBI" id="CHEBI:29035"/>
        <label>1</label>
    </ligand>
</feature>
<feature type="binding site" evidence="2">
    <location>
        <position position="284"/>
    </location>
    <ligand>
        <name>Mg(2+)</name>
        <dbReference type="ChEBI" id="CHEBI:18420"/>
        <label>1</label>
    </ligand>
</feature>
<feature type="binding site" evidence="2">
    <location>
        <position position="284"/>
    </location>
    <ligand>
        <name>Mg(2+)</name>
        <dbReference type="ChEBI" id="CHEBI:18420"/>
        <label>2</label>
    </ligand>
</feature>
<feature type="binding site" evidence="2">
    <location>
        <position position="284"/>
    </location>
    <ligand>
        <name>Mn(2+)</name>
        <dbReference type="ChEBI" id="CHEBI:29035"/>
        <label>1</label>
    </ligand>
</feature>
<feature type="binding site" evidence="2">
    <location>
        <position position="284"/>
    </location>
    <ligand>
        <name>Mn(2+)</name>
        <dbReference type="ChEBI" id="CHEBI:29035"/>
        <label>2</label>
    </ligand>
</feature>
<feature type="binding site" evidence="2">
    <location>
        <position position="286"/>
    </location>
    <ligand>
        <name>Mg(2+)</name>
        <dbReference type="ChEBI" id="CHEBI:18420"/>
        <label>2</label>
    </ligand>
</feature>
<feature type="binding site" evidence="2">
    <location>
        <position position="286"/>
    </location>
    <ligand>
        <name>Mn(2+)</name>
        <dbReference type="ChEBI" id="CHEBI:29035"/>
        <label>2</label>
    </ligand>
</feature>
<name>PUR2_METLZ</name>
<evidence type="ECO:0000250" key="1"/>
<evidence type="ECO:0000255" key="2">
    <source>
        <dbReference type="HAMAP-Rule" id="MF_00138"/>
    </source>
</evidence>